<feature type="chain" id="PRO_1000003774" description="Nucleoid-associated protein MMOB0740">
    <location>
        <begin position="1"/>
        <end position="95"/>
    </location>
</feature>
<gene>
    <name type="ordered locus">MMOB0740</name>
</gene>
<comment type="function">
    <text evidence="1">Binds to DNA and alters its conformation. May be involved in regulation of gene expression, nucleoid organization and DNA protection.</text>
</comment>
<comment type="subunit">
    <text evidence="1">Homodimer.</text>
</comment>
<comment type="subcellular location">
    <subcellularLocation>
        <location evidence="1">Cytoplasm</location>
        <location evidence="1">Nucleoid</location>
    </subcellularLocation>
</comment>
<comment type="similarity">
    <text evidence="1">Belongs to the YbaB/EbfC family.</text>
</comment>
<protein>
    <recommendedName>
        <fullName evidence="1">Nucleoid-associated protein MMOB0740</fullName>
    </recommendedName>
</protein>
<dbReference type="EMBL" id="AE017308">
    <property type="protein sequence ID" value="AAT27560.1"/>
    <property type="molecule type" value="Genomic_DNA"/>
</dbReference>
<dbReference type="RefSeq" id="WP_011264594.1">
    <property type="nucleotide sequence ID" value="NC_006908.1"/>
</dbReference>
<dbReference type="SMR" id="Q6KIL6"/>
<dbReference type="STRING" id="267748.MMOB0740"/>
<dbReference type="KEGG" id="mmo:MMOB0740"/>
<dbReference type="eggNOG" id="COG0718">
    <property type="taxonomic scope" value="Bacteria"/>
</dbReference>
<dbReference type="HOGENOM" id="CLU_140930_1_2_14"/>
<dbReference type="OrthoDB" id="399030at2"/>
<dbReference type="Proteomes" id="UP000009072">
    <property type="component" value="Chromosome"/>
</dbReference>
<dbReference type="GO" id="GO:0043590">
    <property type="term" value="C:bacterial nucleoid"/>
    <property type="evidence" value="ECO:0007669"/>
    <property type="project" value="UniProtKB-UniRule"/>
</dbReference>
<dbReference type="GO" id="GO:0005829">
    <property type="term" value="C:cytosol"/>
    <property type="evidence" value="ECO:0007669"/>
    <property type="project" value="TreeGrafter"/>
</dbReference>
<dbReference type="GO" id="GO:0003677">
    <property type="term" value="F:DNA binding"/>
    <property type="evidence" value="ECO:0007669"/>
    <property type="project" value="UniProtKB-UniRule"/>
</dbReference>
<dbReference type="Gene3D" id="3.30.1310.10">
    <property type="entry name" value="Nucleoid-associated protein YbaB-like domain"/>
    <property type="match status" value="1"/>
</dbReference>
<dbReference type="HAMAP" id="MF_00274">
    <property type="entry name" value="DNA_YbaB_EbfC"/>
    <property type="match status" value="1"/>
</dbReference>
<dbReference type="InterPro" id="IPR036894">
    <property type="entry name" value="YbaB-like_sf"/>
</dbReference>
<dbReference type="InterPro" id="IPR004401">
    <property type="entry name" value="YbaB/EbfC"/>
</dbReference>
<dbReference type="NCBIfam" id="TIGR00103">
    <property type="entry name" value="DNA_YbaB_EbfC"/>
    <property type="match status" value="1"/>
</dbReference>
<dbReference type="PANTHER" id="PTHR33449">
    <property type="entry name" value="NUCLEOID-ASSOCIATED PROTEIN YBAB"/>
    <property type="match status" value="1"/>
</dbReference>
<dbReference type="PANTHER" id="PTHR33449:SF1">
    <property type="entry name" value="NUCLEOID-ASSOCIATED PROTEIN YBAB"/>
    <property type="match status" value="1"/>
</dbReference>
<dbReference type="Pfam" id="PF02575">
    <property type="entry name" value="YbaB_DNA_bd"/>
    <property type="match status" value="1"/>
</dbReference>
<dbReference type="PIRSF" id="PIRSF004555">
    <property type="entry name" value="UCP004555"/>
    <property type="match status" value="1"/>
</dbReference>
<dbReference type="SUPFAM" id="SSF82607">
    <property type="entry name" value="YbaB-like"/>
    <property type="match status" value="1"/>
</dbReference>
<name>Y740_MYCM1</name>
<sequence length="95" mass="10583">MDMKAMLKQAQKMQADLEKKQSELAKKEFNISKQGVEIVINGAKEITKLVIHPALIDEDDKETLEDLLILAFNEAISLISEEEAKIAPKANSLGF</sequence>
<evidence type="ECO:0000255" key="1">
    <source>
        <dbReference type="HAMAP-Rule" id="MF_00274"/>
    </source>
</evidence>
<reference key="1">
    <citation type="journal article" date="2004" name="Genome Res.">
        <title>The complete genome and proteome of Mycoplasma mobile.</title>
        <authorList>
            <person name="Jaffe J.D."/>
            <person name="Stange-Thomann N."/>
            <person name="Smith C."/>
            <person name="DeCaprio D."/>
            <person name="Fisher S."/>
            <person name="Butler J."/>
            <person name="Calvo S."/>
            <person name="Elkins T."/>
            <person name="FitzGerald M.G."/>
            <person name="Hafez N."/>
            <person name="Kodira C.D."/>
            <person name="Major J."/>
            <person name="Wang S."/>
            <person name="Wilkinson J."/>
            <person name="Nicol R."/>
            <person name="Nusbaum C."/>
            <person name="Birren B."/>
            <person name="Berg H.C."/>
            <person name="Church G.M."/>
        </authorList>
    </citation>
    <scope>NUCLEOTIDE SEQUENCE [LARGE SCALE GENOMIC DNA]</scope>
    <source>
        <strain>ATCC 43663 / NCTC 11711 / 163 K</strain>
    </source>
</reference>
<proteinExistence type="inferred from homology"/>
<organism>
    <name type="scientific">Mycoplasma mobile (strain ATCC 43663 / 163K / NCTC 11711)</name>
    <name type="common">Mesomycoplasma mobile</name>
    <dbReference type="NCBI Taxonomy" id="267748"/>
    <lineage>
        <taxon>Bacteria</taxon>
        <taxon>Bacillati</taxon>
        <taxon>Mycoplasmatota</taxon>
        <taxon>Mycoplasmoidales</taxon>
        <taxon>Metamycoplasmataceae</taxon>
        <taxon>Mesomycoplasma</taxon>
    </lineage>
</organism>
<keyword id="KW-0963">Cytoplasm</keyword>
<keyword id="KW-0238">DNA-binding</keyword>
<keyword id="KW-1185">Reference proteome</keyword>
<accession>Q6KIL6</accession>